<comment type="sequence caution" evidence="5">
    <conflict type="erroneous initiation">
        <sequence resource="EMBL-CDS" id="BAC04838"/>
    </conflict>
    <text>Truncated N-terminus.</text>
</comment>
<protein>
    <recommendedName>
        <fullName>TPR and ankyrin repeat-containing protein 1</fullName>
    </recommendedName>
    <alternativeName>
        <fullName>Lupus brain antigen 1 homolog</fullName>
    </alternativeName>
</protein>
<gene>
    <name type="primary">TRANK1</name>
    <name type="synonym">KIAA0342</name>
    <name type="synonym">LBA1</name>
</gene>
<organism>
    <name type="scientific">Homo sapiens</name>
    <name type="common">Human</name>
    <dbReference type="NCBI Taxonomy" id="9606"/>
    <lineage>
        <taxon>Eukaryota</taxon>
        <taxon>Metazoa</taxon>
        <taxon>Chordata</taxon>
        <taxon>Craniata</taxon>
        <taxon>Vertebrata</taxon>
        <taxon>Euteleostomi</taxon>
        <taxon>Mammalia</taxon>
        <taxon>Eutheria</taxon>
        <taxon>Euarchontoglires</taxon>
        <taxon>Primates</taxon>
        <taxon>Haplorrhini</taxon>
        <taxon>Catarrhini</taxon>
        <taxon>Hominidae</taxon>
        <taxon>Homo</taxon>
    </lineage>
</organism>
<dbReference type="EMBL" id="AC097360">
    <property type="status" value="NOT_ANNOTATED_CDS"/>
    <property type="molecule type" value="Genomic_DNA"/>
</dbReference>
<dbReference type="EMBL" id="AC105749">
    <property type="status" value="NOT_ANNOTATED_CDS"/>
    <property type="molecule type" value="Genomic_DNA"/>
</dbReference>
<dbReference type="EMBL" id="AC011816">
    <property type="status" value="NOT_ANNOTATED_CDS"/>
    <property type="molecule type" value="Genomic_DNA"/>
</dbReference>
<dbReference type="EMBL" id="AB002340">
    <property type="protein sequence ID" value="BAA20800.3"/>
    <property type="molecule type" value="mRNA"/>
</dbReference>
<dbReference type="EMBL" id="AK096678">
    <property type="protein sequence ID" value="BAC04838.1"/>
    <property type="status" value="ALT_INIT"/>
    <property type="molecule type" value="mRNA"/>
</dbReference>
<dbReference type="CCDS" id="CCDS46789.2"/>
<dbReference type="RefSeq" id="NP_055646.2">
    <property type="nucleotide sequence ID" value="NM_014831.3"/>
</dbReference>
<dbReference type="SMR" id="O15050"/>
<dbReference type="BioGRID" id="115212">
    <property type="interactions" value="7"/>
</dbReference>
<dbReference type="FunCoup" id="O15050">
    <property type="interactions" value="55"/>
</dbReference>
<dbReference type="IntAct" id="O15050">
    <property type="interactions" value="4"/>
</dbReference>
<dbReference type="STRING" id="9606.ENSP00000494480"/>
<dbReference type="GlyGen" id="O15050">
    <property type="glycosylation" value="3 sites, 1 O-linked glycan (1 site)"/>
</dbReference>
<dbReference type="iPTMnet" id="O15050"/>
<dbReference type="PhosphoSitePlus" id="O15050"/>
<dbReference type="SwissPalm" id="O15050"/>
<dbReference type="BioMuta" id="TRANK1"/>
<dbReference type="jPOST" id="O15050"/>
<dbReference type="MassIVE" id="O15050"/>
<dbReference type="PaxDb" id="9606-ENSP00000416168"/>
<dbReference type="PeptideAtlas" id="O15050"/>
<dbReference type="ProteomicsDB" id="48402"/>
<dbReference type="Antibodypedia" id="51967">
    <property type="antibodies" value="10 antibodies from 8 providers"/>
</dbReference>
<dbReference type="DNASU" id="9881"/>
<dbReference type="Ensembl" id="ENST00000429976.5">
    <property type="protein sequence ID" value="ENSP00000416168.2"/>
    <property type="gene ID" value="ENSG00000168016.15"/>
</dbReference>
<dbReference type="GeneID" id="9881"/>
<dbReference type="KEGG" id="hsa:9881"/>
<dbReference type="UCSC" id="uc003cgj.4">
    <property type="organism name" value="human"/>
</dbReference>
<dbReference type="AGR" id="HGNC:29011"/>
<dbReference type="CTD" id="9881"/>
<dbReference type="DisGeNET" id="9881"/>
<dbReference type="GeneCards" id="TRANK1"/>
<dbReference type="HGNC" id="HGNC:29011">
    <property type="gene designation" value="TRANK1"/>
</dbReference>
<dbReference type="HPA" id="ENSG00000168016">
    <property type="expression patterns" value="Tissue enhanced (brain, fallopian tube)"/>
</dbReference>
<dbReference type="MalaCards" id="TRANK1"/>
<dbReference type="MIM" id="619316">
    <property type="type" value="gene"/>
</dbReference>
<dbReference type="neXtProt" id="NX_O15050"/>
<dbReference type="OpenTargets" id="ENSG00000168016"/>
<dbReference type="Orphanet" id="33543">
    <property type="disease" value="Kleine-Levin syndrome"/>
</dbReference>
<dbReference type="PharmGKB" id="PA165698606"/>
<dbReference type="VEuPathDB" id="HostDB:ENSG00000168016"/>
<dbReference type="eggNOG" id="ENOG502QQZC">
    <property type="taxonomic scope" value="Eukaryota"/>
</dbReference>
<dbReference type="GeneTree" id="ENSGT00940000153370"/>
<dbReference type="HOGENOM" id="CLU_227614_0_0_1"/>
<dbReference type="InParanoid" id="O15050"/>
<dbReference type="OrthoDB" id="3156807at2759"/>
<dbReference type="PAN-GO" id="O15050">
    <property type="GO annotations" value="0 GO annotations based on evolutionary models"/>
</dbReference>
<dbReference type="PhylomeDB" id="O15050"/>
<dbReference type="TreeFam" id="TF335821"/>
<dbReference type="PathwayCommons" id="O15050"/>
<dbReference type="SignaLink" id="O15050"/>
<dbReference type="BioGRID-ORCS" id="9881">
    <property type="hits" value="5 hits in 1124 CRISPR screens"/>
</dbReference>
<dbReference type="ChiTaRS" id="TRANK1">
    <property type="organism name" value="human"/>
</dbReference>
<dbReference type="GenomeRNAi" id="9881"/>
<dbReference type="Pharos" id="O15050">
    <property type="development level" value="Tdark"/>
</dbReference>
<dbReference type="PRO" id="PR:O15050"/>
<dbReference type="Proteomes" id="UP000005640">
    <property type="component" value="Chromosome 3"/>
</dbReference>
<dbReference type="RNAct" id="O15050">
    <property type="molecule type" value="protein"/>
</dbReference>
<dbReference type="Bgee" id="ENSG00000168016">
    <property type="expression patterns" value="Expressed in right hemisphere of cerebellum and 123 other cell types or tissues"/>
</dbReference>
<dbReference type="ExpressionAtlas" id="O15050">
    <property type="expression patterns" value="baseline and differential"/>
</dbReference>
<dbReference type="Gene3D" id="1.25.40.20">
    <property type="entry name" value="Ankyrin repeat-containing domain"/>
    <property type="match status" value="2"/>
</dbReference>
<dbReference type="Gene3D" id="3.40.50.300">
    <property type="entry name" value="P-loop containing nucleotide triphosphate hydrolases"/>
    <property type="match status" value="2"/>
</dbReference>
<dbReference type="Gene3D" id="1.25.40.10">
    <property type="entry name" value="Tetratricopeptide repeat domain"/>
    <property type="match status" value="1"/>
</dbReference>
<dbReference type="InterPro" id="IPR002110">
    <property type="entry name" value="Ankyrin_rpt"/>
</dbReference>
<dbReference type="InterPro" id="IPR036770">
    <property type="entry name" value="Ankyrin_rpt-contain_sf"/>
</dbReference>
<dbReference type="InterPro" id="IPR027417">
    <property type="entry name" value="P-loop_NTPase"/>
</dbReference>
<dbReference type="InterPro" id="IPR011990">
    <property type="entry name" value="TPR-like_helical_dom_sf"/>
</dbReference>
<dbReference type="InterPro" id="IPR019734">
    <property type="entry name" value="TPR_rpt"/>
</dbReference>
<dbReference type="InterPro" id="IPR039904">
    <property type="entry name" value="TRANK1"/>
</dbReference>
<dbReference type="PANTHER" id="PTHR21529">
    <property type="entry name" value="MAMMARY TURMOR VIRUS RECEPTOR HOMOLOG 1, 2 MTVR1, 2"/>
    <property type="match status" value="1"/>
</dbReference>
<dbReference type="PANTHER" id="PTHR21529:SF4">
    <property type="entry name" value="TPR AND ANKYRIN REPEAT-CONTAINING PROTEIN 1"/>
    <property type="match status" value="1"/>
</dbReference>
<dbReference type="SMART" id="SM00248">
    <property type="entry name" value="ANK"/>
    <property type="match status" value="4"/>
</dbReference>
<dbReference type="SMART" id="SM00028">
    <property type="entry name" value="TPR"/>
    <property type="match status" value="2"/>
</dbReference>
<dbReference type="SUPFAM" id="SSF48403">
    <property type="entry name" value="Ankyrin repeat"/>
    <property type="match status" value="2"/>
</dbReference>
<dbReference type="SUPFAM" id="SSF52540">
    <property type="entry name" value="P-loop containing nucleoside triphosphate hydrolases"/>
    <property type="match status" value="1"/>
</dbReference>
<dbReference type="SUPFAM" id="SSF48452">
    <property type="entry name" value="TPR-like"/>
    <property type="match status" value="1"/>
</dbReference>
<dbReference type="PROSITE" id="PS50297">
    <property type="entry name" value="ANK_REP_REGION"/>
    <property type="match status" value="1"/>
</dbReference>
<dbReference type="PROSITE" id="PS50293">
    <property type="entry name" value="TPR_REGION"/>
    <property type="match status" value="1"/>
</dbReference>
<feature type="chain" id="PRO_0000348238" description="TPR and ankyrin repeat-containing protein 1">
    <location>
        <begin position="1"/>
        <end position="2925"/>
    </location>
</feature>
<feature type="repeat" description="TPR 1">
    <location>
        <begin position="15"/>
        <end position="48"/>
    </location>
</feature>
<feature type="repeat" description="TPR 2">
    <location>
        <begin position="50"/>
        <end position="82"/>
    </location>
</feature>
<feature type="repeat" description="ANK 1">
    <location>
        <begin position="168"/>
        <end position="198"/>
    </location>
</feature>
<feature type="repeat" description="ANK 2">
    <location>
        <begin position="203"/>
        <end position="232"/>
    </location>
</feature>
<feature type="repeat" description="ANK 3">
    <location>
        <begin position="240"/>
        <end position="276"/>
    </location>
</feature>
<feature type="repeat" description="ANK 4">
    <location>
        <begin position="463"/>
        <end position="492"/>
    </location>
</feature>
<feature type="repeat" description="ANK 5">
    <location>
        <begin position="497"/>
        <end position="518"/>
    </location>
</feature>
<feature type="repeat" description="ANK 6">
    <location>
        <begin position="546"/>
        <end position="575"/>
    </location>
</feature>
<feature type="repeat" description="TPR 3">
    <location>
        <begin position="1699"/>
        <end position="1732"/>
    </location>
</feature>
<feature type="repeat" description="TPR 4">
    <location>
        <begin position="1793"/>
        <end position="1826"/>
    </location>
</feature>
<feature type="region of interest" description="Disordered" evidence="2">
    <location>
        <begin position="612"/>
        <end position="669"/>
    </location>
</feature>
<feature type="region of interest" description="Disordered" evidence="2">
    <location>
        <begin position="706"/>
        <end position="741"/>
    </location>
</feature>
<feature type="region of interest" description="Disordered" evidence="2">
    <location>
        <begin position="1077"/>
        <end position="1103"/>
    </location>
</feature>
<feature type="coiled-coil region" evidence="1">
    <location>
        <begin position="2301"/>
        <end position="2330"/>
    </location>
</feature>
<feature type="compositionally biased region" description="Polar residues" evidence="2">
    <location>
        <begin position="624"/>
        <end position="641"/>
    </location>
</feature>
<feature type="compositionally biased region" description="Basic and acidic residues" evidence="2">
    <location>
        <begin position="720"/>
        <end position="730"/>
    </location>
</feature>
<feature type="compositionally biased region" description="Acidic residues" evidence="2">
    <location>
        <begin position="1085"/>
        <end position="1103"/>
    </location>
</feature>
<feature type="sequence variant" id="VAR_061021" description="In dbSNP:rs17201603.">
    <original>P</original>
    <variation>L</variation>
    <location>
        <position position="153"/>
    </location>
</feature>
<feature type="sequence variant" id="VAR_046117" description="In dbSNP:rs17201603.">
    <original>P</original>
    <variation>L</variation>
    <location>
        <position position="703"/>
    </location>
</feature>
<feature type="sequence variant" id="VAR_046118" description="In dbSNP:rs11712950." evidence="3 4">
    <original>E</original>
    <variation>G</variation>
    <location>
        <position position="1090"/>
    </location>
</feature>
<feature type="sequence conflict" description="In Ref. 4; BAC04838." evidence="5" ref="4">
    <original>I</original>
    <variation>V</variation>
    <location>
        <position position="1286"/>
    </location>
</feature>
<name>TRNK1_HUMAN</name>
<proteinExistence type="evidence at protein level"/>
<sequence length="2925" mass="336221">MWDPRAARVPPRDLAVLLCNKSNAFFSLGKWNEAFVAAKECLQWDPTYVKGYYRAGYSLLRLHQPYEAARMFFEGLRLVQRSQDQAPVADFLVGVFTTMSSDSIVLQSFLPCFDHIFTTGFPTEVWQSVIEKLAKKGLWHSFLLLSAKKDRLPRNIHVPELSLKSLFEKYVFIGLYEKMEQVPKLVQWLISIGASVETIGPYPLHALMRLCIQARENHLFRWLMDHKPEWKGRINQKDGDGCTVLHVVAAHSPGYLVKRQTEDVQMLLRFGADPTLLDRQSRSVVDVLKRNKNFKAIEKINSHLEKLATCSKDLSGFSNGDGPTSENDIFRKVLEQLVKYMNSGNRLLHKNFLKQEVVQRFLRLLSTLQEIPPDLVCDINQDCATTVFKFLLEKQRWPEVLLLLTRKVSGEPPLGDCLIKDCNFSDLDICTIIPHLSTWDQRKKQLLGCLIDSGALPDGLQESQERPVVTCLKHEDFELAFLLLTKGADPRAISLTEGDTPLHAALHIFLEIKADIGFSFLSHLLDLFWSNPTEFDYLNPNVQDSNGNTLMHILFQKGMLKRVKKLLDLLVKFDINFNLKNKEGKDARHRIKKNDSLLLAWNKALMENRRRSRQDSAAHLGKLSKSTAPGHTSQLKSQGSFKSVPCGATARTLPEGSAVPDSWETLPGTQVTRKEPGALRPCSLRDCLMQDITVLIQQVEVDPSFPEDCLQSSEPLEAGAGKEGKKDDKPTLGAGAPDCSEVGEGHAQVGLGALQLVPDDNRGKEGNDDQDDWSTQEIEACLQDFDNMTWEIECTSEMLKKLSSKVMTKVIKKKIILAIQQLGNGEWTQGLQKRLKHLKGSIQLFEAKLDKGARMLWELAIDFSPRCSENPEKIIATEQNTCAMEKSGRIYTEIIRIWDIVLDHCKLADSIKAICNAYNRGLSCVLRKKLKGINKGQVSANMKIQKRIPRCYVEDTEAEKGREHVNPEYFPPASAVETEYNIMKFHSFSTNMAFNILNDTTATVEYPFRVGELEYAVIDLNPRPLEPIILIGRSGTGKTTCCLYRLWKKFHVYWEKAEQAGSPLLAKQVWLKRRLEVEPGKESPGGEEEEEEEDEEEEDSIEVETVESIDEQEYEACAGGAGVEPAGDGQAAEVCAPEHPHQLEHLHQIFVTKNHVLCQEVQRNFIELSKSTKATSHYKPLDPNIHKLQDLRDENFPLFVTSKQLLLLLDASLPKPFFLRNEDGSLKRTIIGWSAQEESTIPSWQEDEEEAEVDGDYSEEDKAVEMRTGDSDPRVYVTFEVFKNEIWPKMTKGRTAYNPALIWKEIKSFLKGSFEALSCPHGRLTEEVYKKLGRKRCPNFKEDRSEIYSLFSLYQQIRSQKGYFDEEDVLYNISRRLSKLRVLPWSIHELYGDEIQDFTQAELALLMKCINDPNSMFLTGDTAQSIMKGVAFRFSDLRSLFHYASRNTIDKQCAVRKPKKIHQLYQNYRSHSGILNLASGVVDLLQFYFPESFDRLPRDSGLFDGPKPTVLESCSVSDLAILLRGNKRKTQPIEFGAHQVILVANETAKEKIPEELGLALVLTIYEAKGLEFDDVLLYNFFTDSEAYKEWKIISSFTPTSTDSREENRPLVEVPLDKPGSSQGRSLMVNPEMYKLLNGELKQLYTAITRARVNLWIFDENREKRAPAFKYFIRRDFVQVVKTDENKDFDDSMFVKTSTPAEWIAQGDYYAKHQCWKVAAKCYQKGGAFEKEKLALAHDTALSMKSKKVSPKEKQLEYLELAKTYLECKEPTLSLKCLSYAKEFQLSAQLCERLGKIRDAAYFYKRSQCYKDAFRCFEQIQEFDLALKMYCQEELFEEAAIAVEKYEEMLKTKTLPISKLSYSASQFYLEAAAKYLSANKMKEMMAVLSKLDIEDQLVFLKSRKRLAEAADLLNREGRREEAALLMKQHGCLLEAARLTADKDFQASCLLGAARLNVARDSDIEHTKDILREALDICYQTGQLSGIAEAHFLQGVILRDFQKLRDAFFKFDTLNHSAGVVEALYEAASQCEAEPEKILGLAPGGLEILLSLVRALKRVTNNAEKEMVKSCFEFFGISQVDAKYCQIAQNDPGPILRIIFDLDLNLREKKTKDHFLIMTDQVKLALNKHLLGRLCQITRSLLGKTYRGVCMRFIVGLKCEDENCEHFHRPLRRCEAKCLVQSKMNLVAINGLLLEAKKVFPKILAEELKEIDYILSTDMYGLCKSILDVLFPKHFHQRVLSENPMACKEILKPNYKSFRFYRFALKEYIHFLFENESARNRRESTDLWLSAMQAFLLSSNYPEEFEKLLHQEEDNYNRELKALESEKDERGRGRGSRIKGIEGKFGMLAPNRDDENMDKTHLCFIRLLENCIDQFYVYRNPEDYKRLFFRFMNVLIKRCKEPLIPSIGNTVALLEFQFIHCGVVLARLWKNVILCLPKSYIALLHYWEFLFSKKDKELGDVFSIIQEYKPKDVTRAIQDFRFHLSYLAKVLCGYENVNFNVLLDAFSEIDYVVSGEAERTLVLCLVMLVNAEEILQPYCKPLLYRHFREIESRLQLMSMDCPGQVPERLLKVVKRVLVAVNVKSVAEALQDLLFERDEEYLMDCDWRWDPVHTKGSIVRGLYYEEVRLNRLLCLDPVDYFAEPECEFGQDEMDELALEDRDHVLATILSQKQRKASIQRKLRRACLVVSLCISWRRRVGTQMERVREEAREPRAGNFKKADVDRTQCDLCGVKFTRGPENYFSPSKAFEGAASEVAVLSRAELEREECQERNSESYEQHIHLEHHQRQQVAYQKYSEFFHEKVDPAIDEGKLVVQDIEQSVWIHSHVGSKEHSHMLQKVQEHIKRVSDMVEDLYRRKAWAGAEEAMTRLVNILILSVRDARDWLMKTETRLKKEGIVQEDDYENEVEDFGELRPRRRSRKCGKQRKY</sequence>
<evidence type="ECO:0000255" key="1"/>
<evidence type="ECO:0000256" key="2">
    <source>
        <dbReference type="SAM" id="MobiDB-lite"/>
    </source>
</evidence>
<evidence type="ECO:0000269" key="3">
    <source>
    </source>
</evidence>
<evidence type="ECO:0000269" key="4">
    <source>
    </source>
</evidence>
<evidence type="ECO:0000305" key="5"/>
<keyword id="KW-0040">ANK repeat</keyword>
<keyword id="KW-0175">Coiled coil</keyword>
<keyword id="KW-1267">Proteomics identification</keyword>
<keyword id="KW-1185">Reference proteome</keyword>
<keyword id="KW-0677">Repeat</keyword>
<keyword id="KW-0802">TPR repeat</keyword>
<accession>O15050</accession>
<accession>Q8N8K0</accession>
<reference key="1">
    <citation type="journal article" date="2006" name="Nature">
        <title>The DNA sequence, annotation and analysis of human chromosome 3.</title>
        <authorList>
            <person name="Muzny D.M."/>
            <person name="Scherer S.E."/>
            <person name="Kaul R."/>
            <person name="Wang J."/>
            <person name="Yu J."/>
            <person name="Sudbrak R."/>
            <person name="Buhay C.J."/>
            <person name="Chen R."/>
            <person name="Cree A."/>
            <person name="Ding Y."/>
            <person name="Dugan-Rocha S."/>
            <person name="Gill R."/>
            <person name="Gunaratne P."/>
            <person name="Harris R.A."/>
            <person name="Hawes A.C."/>
            <person name="Hernandez J."/>
            <person name="Hodgson A.V."/>
            <person name="Hume J."/>
            <person name="Jackson A."/>
            <person name="Khan Z.M."/>
            <person name="Kovar-Smith C."/>
            <person name="Lewis L.R."/>
            <person name="Lozado R.J."/>
            <person name="Metzker M.L."/>
            <person name="Milosavljevic A."/>
            <person name="Miner G.R."/>
            <person name="Morgan M.B."/>
            <person name="Nazareth L.V."/>
            <person name="Scott G."/>
            <person name="Sodergren E."/>
            <person name="Song X.-Z."/>
            <person name="Steffen D."/>
            <person name="Wei S."/>
            <person name="Wheeler D.A."/>
            <person name="Wright M.W."/>
            <person name="Worley K.C."/>
            <person name="Yuan Y."/>
            <person name="Zhang Z."/>
            <person name="Adams C.Q."/>
            <person name="Ansari-Lari M.A."/>
            <person name="Ayele M."/>
            <person name="Brown M.J."/>
            <person name="Chen G."/>
            <person name="Chen Z."/>
            <person name="Clendenning J."/>
            <person name="Clerc-Blankenburg K.P."/>
            <person name="Chen R."/>
            <person name="Chen Z."/>
            <person name="Davis C."/>
            <person name="Delgado O."/>
            <person name="Dinh H.H."/>
            <person name="Dong W."/>
            <person name="Draper H."/>
            <person name="Ernst S."/>
            <person name="Fu G."/>
            <person name="Gonzalez-Garay M.L."/>
            <person name="Garcia D.K."/>
            <person name="Gillett W."/>
            <person name="Gu J."/>
            <person name="Hao B."/>
            <person name="Haugen E."/>
            <person name="Havlak P."/>
            <person name="He X."/>
            <person name="Hennig S."/>
            <person name="Hu S."/>
            <person name="Huang W."/>
            <person name="Jackson L.R."/>
            <person name="Jacob L.S."/>
            <person name="Kelly S.H."/>
            <person name="Kube M."/>
            <person name="Levy R."/>
            <person name="Li Z."/>
            <person name="Liu B."/>
            <person name="Liu J."/>
            <person name="Liu W."/>
            <person name="Lu J."/>
            <person name="Maheshwari M."/>
            <person name="Nguyen B.-V."/>
            <person name="Okwuonu G.O."/>
            <person name="Palmeiri A."/>
            <person name="Pasternak S."/>
            <person name="Perez L.M."/>
            <person name="Phelps K.A."/>
            <person name="Plopper F.J."/>
            <person name="Qiang B."/>
            <person name="Raymond C."/>
            <person name="Rodriguez R."/>
            <person name="Saenphimmachak C."/>
            <person name="Santibanez J."/>
            <person name="Shen H."/>
            <person name="Shen Y."/>
            <person name="Subramanian S."/>
            <person name="Tabor P.E."/>
            <person name="Verduzco D."/>
            <person name="Waldron L."/>
            <person name="Wang J."/>
            <person name="Wang J."/>
            <person name="Wang Q."/>
            <person name="Williams G.A."/>
            <person name="Wong G.K.-S."/>
            <person name="Yao Z."/>
            <person name="Zhang J."/>
            <person name="Zhang X."/>
            <person name="Zhao G."/>
            <person name="Zhou J."/>
            <person name="Zhou Y."/>
            <person name="Nelson D."/>
            <person name="Lehrach H."/>
            <person name="Reinhardt R."/>
            <person name="Naylor S.L."/>
            <person name="Yang H."/>
            <person name="Olson M."/>
            <person name="Weinstock G."/>
            <person name="Gibbs R.A."/>
        </authorList>
    </citation>
    <scope>NUCLEOTIDE SEQUENCE [LARGE SCALE GENOMIC DNA]</scope>
</reference>
<reference key="2">
    <citation type="journal article" date="1997" name="DNA Res.">
        <title>Prediction of the coding sequences of unidentified human genes. VII. The complete sequences of 100 new cDNA clones from brain which can code for large proteins in vitro.</title>
        <authorList>
            <person name="Nagase T."/>
            <person name="Ishikawa K."/>
            <person name="Nakajima D."/>
            <person name="Ohira M."/>
            <person name="Seki N."/>
            <person name="Miyajima N."/>
            <person name="Tanaka A."/>
            <person name="Kotani H."/>
            <person name="Nomura N."/>
            <person name="Ohara O."/>
        </authorList>
    </citation>
    <scope>NUCLEOTIDE SEQUENCE [LARGE SCALE MRNA] OF 459-2925</scope>
    <scope>VARIANT GLY-1090</scope>
    <source>
        <tissue>Brain</tissue>
    </source>
</reference>
<reference key="3">
    <citation type="journal article" date="2002" name="DNA Res.">
        <title>Construction of expression-ready cDNA clones for KIAA genes: manual curation of 330 KIAA cDNA clones.</title>
        <authorList>
            <person name="Nakajima D."/>
            <person name="Okazaki N."/>
            <person name="Yamakawa H."/>
            <person name="Kikuno R."/>
            <person name="Ohara O."/>
            <person name="Nagase T."/>
        </authorList>
    </citation>
    <scope>SEQUENCE REVISION</scope>
</reference>
<reference key="4">
    <citation type="journal article" date="2004" name="Nat. Genet.">
        <title>Complete sequencing and characterization of 21,243 full-length human cDNAs.</title>
        <authorList>
            <person name="Ota T."/>
            <person name="Suzuki Y."/>
            <person name="Nishikawa T."/>
            <person name="Otsuki T."/>
            <person name="Sugiyama T."/>
            <person name="Irie R."/>
            <person name="Wakamatsu A."/>
            <person name="Hayashi K."/>
            <person name="Sato H."/>
            <person name="Nagai K."/>
            <person name="Kimura K."/>
            <person name="Makita H."/>
            <person name="Sekine M."/>
            <person name="Obayashi M."/>
            <person name="Nishi T."/>
            <person name="Shibahara T."/>
            <person name="Tanaka T."/>
            <person name="Ishii S."/>
            <person name="Yamamoto J."/>
            <person name="Saito K."/>
            <person name="Kawai Y."/>
            <person name="Isono Y."/>
            <person name="Nakamura Y."/>
            <person name="Nagahari K."/>
            <person name="Murakami K."/>
            <person name="Yasuda T."/>
            <person name="Iwayanagi T."/>
            <person name="Wagatsuma M."/>
            <person name="Shiratori A."/>
            <person name="Sudo H."/>
            <person name="Hosoiri T."/>
            <person name="Kaku Y."/>
            <person name="Kodaira H."/>
            <person name="Kondo H."/>
            <person name="Sugawara M."/>
            <person name="Takahashi M."/>
            <person name="Kanda K."/>
            <person name="Yokoi T."/>
            <person name="Furuya T."/>
            <person name="Kikkawa E."/>
            <person name="Omura Y."/>
            <person name="Abe K."/>
            <person name="Kamihara K."/>
            <person name="Katsuta N."/>
            <person name="Sato K."/>
            <person name="Tanikawa M."/>
            <person name="Yamazaki M."/>
            <person name="Ninomiya K."/>
            <person name="Ishibashi T."/>
            <person name="Yamashita H."/>
            <person name="Murakawa K."/>
            <person name="Fujimori K."/>
            <person name="Tanai H."/>
            <person name="Kimata M."/>
            <person name="Watanabe M."/>
            <person name="Hiraoka S."/>
            <person name="Chiba Y."/>
            <person name="Ishida S."/>
            <person name="Ono Y."/>
            <person name="Takiguchi S."/>
            <person name="Watanabe S."/>
            <person name="Yosida M."/>
            <person name="Hotuta T."/>
            <person name="Kusano J."/>
            <person name="Kanehori K."/>
            <person name="Takahashi-Fujii A."/>
            <person name="Hara H."/>
            <person name="Tanase T.-O."/>
            <person name="Nomura Y."/>
            <person name="Togiya S."/>
            <person name="Komai F."/>
            <person name="Hara R."/>
            <person name="Takeuchi K."/>
            <person name="Arita M."/>
            <person name="Imose N."/>
            <person name="Musashino K."/>
            <person name="Yuuki H."/>
            <person name="Oshima A."/>
            <person name="Sasaki N."/>
            <person name="Aotsuka S."/>
            <person name="Yoshikawa Y."/>
            <person name="Matsunawa H."/>
            <person name="Ichihara T."/>
            <person name="Shiohata N."/>
            <person name="Sano S."/>
            <person name="Moriya S."/>
            <person name="Momiyama H."/>
            <person name="Satoh N."/>
            <person name="Takami S."/>
            <person name="Terashima Y."/>
            <person name="Suzuki O."/>
            <person name="Nakagawa S."/>
            <person name="Senoh A."/>
            <person name="Mizoguchi H."/>
            <person name="Goto Y."/>
            <person name="Shimizu F."/>
            <person name="Wakebe H."/>
            <person name="Hishigaki H."/>
            <person name="Watanabe T."/>
            <person name="Sugiyama A."/>
            <person name="Takemoto M."/>
            <person name="Kawakami B."/>
            <person name="Yamazaki M."/>
            <person name="Watanabe K."/>
            <person name="Kumagai A."/>
            <person name="Itakura S."/>
            <person name="Fukuzumi Y."/>
            <person name="Fujimori Y."/>
            <person name="Komiyama M."/>
            <person name="Tashiro H."/>
            <person name="Tanigami A."/>
            <person name="Fujiwara T."/>
            <person name="Ono T."/>
            <person name="Yamada K."/>
            <person name="Fujii Y."/>
            <person name="Ozaki K."/>
            <person name="Hirao M."/>
            <person name="Ohmori Y."/>
            <person name="Kawabata A."/>
            <person name="Hikiji T."/>
            <person name="Kobatake N."/>
            <person name="Inagaki H."/>
            <person name="Ikema Y."/>
            <person name="Okamoto S."/>
            <person name="Okitani R."/>
            <person name="Kawakami T."/>
            <person name="Noguchi S."/>
            <person name="Itoh T."/>
            <person name="Shigeta K."/>
            <person name="Senba T."/>
            <person name="Matsumura K."/>
            <person name="Nakajima Y."/>
            <person name="Mizuno T."/>
            <person name="Morinaga M."/>
            <person name="Sasaki M."/>
            <person name="Togashi T."/>
            <person name="Oyama M."/>
            <person name="Hata H."/>
            <person name="Watanabe M."/>
            <person name="Komatsu T."/>
            <person name="Mizushima-Sugano J."/>
            <person name="Satoh T."/>
            <person name="Shirai Y."/>
            <person name="Takahashi Y."/>
            <person name="Nakagawa K."/>
            <person name="Okumura K."/>
            <person name="Nagase T."/>
            <person name="Nomura N."/>
            <person name="Kikuchi H."/>
            <person name="Masuho Y."/>
            <person name="Yamashita R."/>
            <person name="Nakai K."/>
            <person name="Yada T."/>
            <person name="Nakamura Y."/>
            <person name="Ohara O."/>
            <person name="Isogai T."/>
            <person name="Sugano S."/>
        </authorList>
    </citation>
    <scope>NUCLEOTIDE SEQUENCE [LARGE SCALE MRNA] OF 713-1525</scope>
    <scope>VARIANT GLY-1090</scope>
</reference>